<accession>B3A0C0</accession>
<sequence>AQSFLRL</sequence>
<dbReference type="GO" id="GO:0005576">
    <property type="term" value="C:extracellular region"/>
    <property type="evidence" value="ECO:0007669"/>
    <property type="project" value="UniProtKB-SubCell"/>
</dbReference>
<dbReference type="GO" id="GO:0007218">
    <property type="term" value="P:neuropeptide signaling pathway"/>
    <property type="evidence" value="ECO:0007669"/>
    <property type="project" value="UniProtKB-KW"/>
</dbReference>
<reference evidence="5" key="1">
    <citation type="journal article" date="2012" name="Syst. Biol.">
        <title>Peptidomics-based phylogeny and biogeography of Mantophasmatodea (Hexapoda).</title>
        <authorList>
            <person name="Predel R."/>
            <person name="Neupert S."/>
            <person name="Huetteroth W."/>
            <person name="Kahnt J."/>
            <person name="Waidelich D."/>
            <person name="Roth S."/>
        </authorList>
    </citation>
    <scope>PROTEIN SEQUENCE</scope>
    <scope>AMIDATION AT LEU-7</scope>
    <source>
        <tissue evidence="3">Thoracic perisympathetic organs</tissue>
    </source>
</reference>
<protein>
    <recommendedName>
        <fullName evidence="4">Extended FMRFamide-1</fullName>
        <shortName evidence="4">FMRFa-1</shortName>
    </recommendedName>
</protein>
<feature type="peptide" id="PRO_0000421477" description="Extended FMRFamide-1" evidence="3">
    <location>
        <begin position="1"/>
        <end position="7"/>
    </location>
</feature>
<feature type="modified residue" description="Leucine amide" evidence="3">
    <location>
        <position position="7"/>
    </location>
</feature>
<feature type="unsure residue" description="L or I" evidence="3">
    <location>
        <position position="5"/>
    </location>
</feature>
<feature type="unsure residue" description="L or I" evidence="3">
    <location>
        <position position="7"/>
    </location>
</feature>
<comment type="function">
    <text evidence="1">FMRFamides and FMRFamide-like peptides are neuropeptides.</text>
</comment>
<comment type="subcellular location">
    <subcellularLocation>
        <location evidence="6">Secreted</location>
    </subcellularLocation>
</comment>
<comment type="similarity">
    <text evidence="2">Belongs to the FARP (FMRF amide related peptide) family.</text>
</comment>
<keyword id="KW-0027">Amidation</keyword>
<keyword id="KW-0903">Direct protein sequencing</keyword>
<keyword id="KW-0527">Neuropeptide</keyword>
<keyword id="KW-0964">Secreted</keyword>
<name>FAR1_HEMMO</name>
<evidence type="ECO:0000250" key="1">
    <source>
        <dbReference type="UniProtKB" id="P34405"/>
    </source>
</evidence>
<evidence type="ECO:0000255" key="2"/>
<evidence type="ECO:0000269" key="3">
    <source>
    </source>
</evidence>
<evidence type="ECO:0000303" key="4">
    <source>
    </source>
</evidence>
<evidence type="ECO:0000305" key="5"/>
<evidence type="ECO:0000305" key="6">
    <source>
    </source>
</evidence>
<proteinExistence type="evidence at protein level"/>
<organism>
    <name type="scientific">Hemilobophasma montaguense</name>
    <name type="common">Gladiator</name>
    <name type="synonym">Heel-walker</name>
    <dbReference type="NCBI Taxonomy" id="253130"/>
    <lineage>
        <taxon>Eukaryota</taxon>
        <taxon>Metazoa</taxon>
        <taxon>Ecdysozoa</taxon>
        <taxon>Arthropoda</taxon>
        <taxon>Hexapoda</taxon>
        <taxon>Insecta</taxon>
        <taxon>Pterygota</taxon>
        <taxon>Neoptera</taxon>
        <taxon>Polyneoptera</taxon>
        <taxon>Mantophasmatodea</taxon>
        <taxon>Austrophasmatidae</taxon>
        <taxon>Hemilobophasma</taxon>
    </lineage>
</organism>